<reference key="1">
    <citation type="journal article" date="2006" name="Proc. Natl. Acad. Sci. U.S.A.">
        <title>Comparative genomics of the lactic acid bacteria.</title>
        <authorList>
            <person name="Makarova K.S."/>
            <person name="Slesarev A."/>
            <person name="Wolf Y.I."/>
            <person name="Sorokin A."/>
            <person name="Mirkin B."/>
            <person name="Koonin E.V."/>
            <person name="Pavlov A."/>
            <person name="Pavlova N."/>
            <person name="Karamychev V."/>
            <person name="Polouchine N."/>
            <person name="Shakhova V."/>
            <person name="Grigoriev I."/>
            <person name="Lou Y."/>
            <person name="Rohksar D."/>
            <person name="Lucas S."/>
            <person name="Huang K."/>
            <person name="Goodstein D.M."/>
            <person name="Hawkins T."/>
            <person name="Plengvidhya V."/>
            <person name="Welker D."/>
            <person name="Hughes J."/>
            <person name="Goh Y."/>
            <person name="Benson A."/>
            <person name="Baldwin K."/>
            <person name="Lee J.-H."/>
            <person name="Diaz-Muniz I."/>
            <person name="Dosti B."/>
            <person name="Smeianov V."/>
            <person name="Wechter W."/>
            <person name="Barabote R."/>
            <person name="Lorca G."/>
            <person name="Altermann E."/>
            <person name="Barrangou R."/>
            <person name="Ganesan B."/>
            <person name="Xie Y."/>
            <person name="Rawsthorne H."/>
            <person name="Tamir D."/>
            <person name="Parker C."/>
            <person name="Breidt F."/>
            <person name="Broadbent J.R."/>
            <person name="Hutkins R."/>
            <person name="O'Sullivan D."/>
            <person name="Steele J."/>
            <person name="Unlu G."/>
            <person name="Saier M.H. Jr."/>
            <person name="Klaenhammer T."/>
            <person name="Richardson P."/>
            <person name="Kozyavkin S."/>
            <person name="Weimer B.C."/>
            <person name="Mills D.A."/>
        </authorList>
    </citation>
    <scope>NUCLEOTIDE SEQUENCE [LARGE SCALE GENOMIC DNA]</scope>
    <source>
        <strain>ATCC 25745 / CCUG 21536 / LMG 10740 / 183-1w</strain>
    </source>
</reference>
<comment type="function">
    <text evidence="1">Catalyzes the condensation of (S)-aspartate-beta-semialdehyde [(S)-ASA] and pyruvate to 4-hydroxy-tetrahydrodipicolinate (HTPA).</text>
</comment>
<comment type="catalytic activity">
    <reaction evidence="1">
        <text>L-aspartate 4-semialdehyde + pyruvate = (2S,4S)-4-hydroxy-2,3,4,5-tetrahydrodipicolinate + H2O + H(+)</text>
        <dbReference type="Rhea" id="RHEA:34171"/>
        <dbReference type="ChEBI" id="CHEBI:15361"/>
        <dbReference type="ChEBI" id="CHEBI:15377"/>
        <dbReference type="ChEBI" id="CHEBI:15378"/>
        <dbReference type="ChEBI" id="CHEBI:67139"/>
        <dbReference type="ChEBI" id="CHEBI:537519"/>
        <dbReference type="EC" id="4.3.3.7"/>
    </reaction>
</comment>
<comment type="pathway">
    <text evidence="1">Amino-acid biosynthesis; L-lysine biosynthesis via DAP pathway; (S)-tetrahydrodipicolinate from L-aspartate: step 3/4.</text>
</comment>
<comment type="subunit">
    <text evidence="1">Homotetramer; dimer of dimers.</text>
</comment>
<comment type="subcellular location">
    <subcellularLocation>
        <location evidence="1">Cytoplasm</location>
    </subcellularLocation>
</comment>
<comment type="similarity">
    <text evidence="1">Belongs to the DapA family.</text>
</comment>
<comment type="caution">
    <text evidence="2">Was originally thought to be a dihydrodipicolinate synthase (DHDPS), catalyzing the condensation of (S)-aspartate-beta-semialdehyde [(S)-ASA] and pyruvate to dihydrodipicolinate (DHDP). However, it was shown in E.coli that the product of the enzymatic reaction is not dihydrodipicolinate but in fact (4S)-4-hydroxy-2,3,4,5-tetrahydro-(2S)-dipicolinic acid (HTPA), and that the consecutive dehydration reaction leading to DHDP is not spontaneous but catalyzed by DapB.</text>
</comment>
<sequence>MLENVDLISAIITPFDDQLKINFTALERLTNHLIETGNTGFIIGGTTGETPTLTHAEKLGLYTRFAEIVAGRVPIIAGTGSNNTQATIDFTKEVRQIDGIIAALVVTPYYNKPNQRGMVAHFKTVARQADFPIMMYNIPGRTGVQMENATIVELSQEPNIIGIKQCTNLNDIGFLVENTPNDFAVYTGNDPETLGAVALGANGVASVASHIYGYQIRALLDAVKHGDLLKAGKLQRELTPKMEALFLYPSPAPVKAVLNAQNWSVGSPRLPILPLNQKEKLNLAHQLGVNHLADVQLHY</sequence>
<name>DAPA_PEDPA</name>
<keyword id="KW-0028">Amino-acid biosynthesis</keyword>
<keyword id="KW-0963">Cytoplasm</keyword>
<keyword id="KW-0220">Diaminopimelate biosynthesis</keyword>
<keyword id="KW-0456">Lyase</keyword>
<keyword id="KW-0457">Lysine biosynthesis</keyword>
<keyword id="KW-0704">Schiff base</keyword>
<feature type="chain" id="PRO_0000340975" description="4-hydroxy-tetrahydrodipicolinate synthase">
    <location>
        <begin position="1"/>
        <end position="299"/>
    </location>
</feature>
<feature type="active site" description="Proton donor/acceptor" evidence="1">
    <location>
        <position position="136"/>
    </location>
</feature>
<feature type="active site" description="Schiff-base intermediate with substrate" evidence="1">
    <location>
        <position position="164"/>
    </location>
</feature>
<feature type="binding site" evidence="1">
    <location>
        <position position="47"/>
    </location>
    <ligand>
        <name>pyruvate</name>
        <dbReference type="ChEBI" id="CHEBI:15361"/>
    </ligand>
</feature>
<feature type="binding site" evidence="1">
    <location>
        <position position="205"/>
    </location>
    <ligand>
        <name>pyruvate</name>
        <dbReference type="ChEBI" id="CHEBI:15361"/>
    </ligand>
</feature>
<feature type="site" description="Part of a proton relay during catalysis" evidence="1">
    <location>
        <position position="46"/>
    </location>
</feature>
<feature type="site" description="Part of a proton relay during catalysis" evidence="1">
    <location>
        <position position="110"/>
    </location>
</feature>
<accession>Q03HT2</accession>
<proteinExistence type="inferred from homology"/>
<organism>
    <name type="scientific">Pediococcus pentosaceus (strain ATCC 25745 / CCUG 21536 / LMG 10740 / 183-1w)</name>
    <dbReference type="NCBI Taxonomy" id="278197"/>
    <lineage>
        <taxon>Bacteria</taxon>
        <taxon>Bacillati</taxon>
        <taxon>Bacillota</taxon>
        <taxon>Bacilli</taxon>
        <taxon>Lactobacillales</taxon>
        <taxon>Lactobacillaceae</taxon>
        <taxon>Pediococcus</taxon>
    </lineage>
</organism>
<dbReference type="EC" id="4.3.3.7" evidence="1"/>
<dbReference type="EMBL" id="CP000422">
    <property type="protein sequence ID" value="ABJ67240.1"/>
    <property type="molecule type" value="Genomic_DNA"/>
</dbReference>
<dbReference type="RefSeq" id="WP_011672864.1">
    <property type="nucleotide sequence ID" value="NC_008525.1"/>
</dbReference>
<dbReference type="SMR" id="Q03HT2"/>
<dbReference type="STRING" id="278197.PEPE_0133"/>
<dbReference type="GeneID" id="33062713"/>
<dbReference type="KEGG" id="ppe:PEPE_0133"/>
<dbReference type="eggNOG" id="COG0329">
    <property type="taxonomic scope" value="Bacteria"/>
</dbReference>
<dbReference type="HOGENOM" id="CLU_049343_7_1_9"/>
<dbReference type="OrthoDB" id="9782828at2"/>
<dbReference type="UniPathway" id="UPA00034">
    <property type="reaction ID" value="UER00017"/>
</dbReference>
<dbReference type="Proteomes" id="UP000000773">
    <property type="component" value="Chromosome"/>
</dbReference>
<dbReference type="GO" id="GO:0005829">
    <property type="term" value="C:cytosol"/>
    <property type="evidence" value="ECO:0007669"/>
    <property type="project" value="TreeGrafter"/>
</dbReference>
<dbReference type="GO" id="GO:0008840">
    <property type="term" value="F:4-hydroxy-tetrahydrodipicolinate synthase activity"/>
    <property type="evidence" value="ECO:0007669"/>
    <property type="project" value="UniProtKB-UniRule"/>
</dbReference>
<dbReference type="GO" id="GO:0019877">
    <property type="term" value="P:diaminopimelate biosynthetic process"/>
    <property type="evidence" value="ECO:0007669"/>
    <property type="project" value="UniProtKB-UniRule"/>
</dbReference>
<dbReference type="GO" id="GO:0009089">
    <property type="term" value="P:lysine biosynthetic process via diaminopimelate"/>
    <property type="evidence" value="ECO:0007669"/>
    <property type="project" value="UniProtKB-UniRule"/>
</dbReference>
<dbReference type="CDD" id="cd00950">
    <property type="entry name" value="DHDPS"/>
    <property type="match status" value="1"/>
</dbReference>
<dbReference type="Gene3D" id="3.20.20.70">
    <property type="entry name" value="Aldolase class I"/>
    <property type="match status" value="1"/>
</dbReference>
<dbReference type="HAMAP" id="MF_00418">
    <property type="entry name" value="DapA"/>
    <property type="match status" value="1"/>
</dbReference>
<dbReference type="InterPro" id="IPR013785">
    <property type="entry name" value="Aldolase_TIM"/>
</dbReference>
<dbReference type="InterPro" id="IPR005263">
    <property type="entry name" value="DapA"/>
</dbReference>
<dbReference type="InterPro" id="IPR002220">
    <property type="entry name" value="DapA-like"/>
</dbReference>
<dbReference type="InterPro" id="IPR020625">
    <property type="entry name" value="Schiff_base-form_aldolases_AS"/>
</dbReference>
<dbReference type="NCBIfam" id="TIGR00674">
    <property type="entry name" value="dapA"/>
    <property type="match status" value="1"/>
</dbReference>
<dbReference type="PANTHER" id="PTHR12128:SF66">
    <property type="entry name" value="4-HYDROXY-2-OXOGLUTARATE ALDOLASE, MITOCHONDRIAL"/>
    <property type="match status" value="1"/>
</dbReference>
<dbReference type="PANTHER" id="PTHR12128">
    <property type="entry name" value="DIHYDRODIPICOLINATE SYNTHASE"/>
    <property type="match status" value="1"/>
</dbReference>
<dbReference type="Pfam" id="PF00701">
    <property type="entry name" value="DHDPS"/>
    <property type="match status" value="1"/>
</dbReference>
<dbReference type="PIRSF" id="PIRSF001365">
    <property type="entry name" value="DHDPS"/>
    <property type="match status" value="1"/>
</dbReference>
<dbReference type="PRINTS" id="PR00146">
    <property type="entry name" value="DHPICSNTHASE"/>
</dbReference>
<dbReference type="SMART" id="SM01130">
    <property type="entry name" value="DHDPS"/>
    <property type="match status" value="1"/>
</dbReference>
<dbReference type="SUPFAM" id="SSF51569">
    <property type="entry name" value="Aldolase"/>
    <property type="match status" value="1"/>
</dbReference>
<dbReference type="PROSITE" id="PS00666">
    <property type="entry name" value="DHDPS_2"/>
    <property type="match status" value="1"/>
</dbReference>
<protein>
    <recommendedName>
        <fullName evidence="1">4-hydroxy-tetrahydrodipicolinate synthase</fullName>
        <shortName evidence="1">HTPA synthase</shortName>
        <ecNumber evidence="1">4.3.3.7</ecNumber>
    </recommendedName>
</protein>
<gene>
    <name evidence="1" type="primary">dapA</name>
    <name type="ordered locus">PEPE_0133</name>
</gene>
<evidence type="ECO:0000255" key="1">
    <source>
        <dbReference type="HAMAP-Rule" id="MF_00418"/>
    </source>
</evidence>
<evidence type="ECO:0000305" key="2"/>